<sequence>MTDLTQLEMIIEKAFDDRNSINTTTKGEILESVEHALNLLDKGEVRVVKRQKNGKWHVHQWLKKAVLLSFRLNPMQIMTGGVNGTSWWDKVPSKFSHWQEADFKKADFRSVPGAIVRHSAYIAPNVILMPSFVNLGAFVDEGTMVDTWATVGSCAQIGKHVHLSGGVGIGGVLEPLQANPTIIEDHCFIGARSEVVEGCIIREGSVLGMGVFIGKSTKIIDRTTGEIFIGEVPPYSVVVPGSLPGKPLPNGEIGPNLYCAVIVKRVDQKTREKTSINDLLRD</sequence>
<comment type="catalytic activity">
    <reaction evidence="1">
        <text>(S)-2,3,4,5-tetrahydrodipicolinate + succinyl-CoA + H2O = (S)-2-succinylamino-6-oxoheptanedioate + CoA</text>
        <dbReference type="Rhea" id="RHEA:17325"/>
        <dbReference type="ChEBI" id="CHEBI:15377"/>
        <dbReference type="ChEBI" id="CHEBI:15685"/>
        <dbReference type="ChEBI" id="CHEBI:16845"/>
        <dbReference type="ChEBI" id="CHEBI:57287"/>
        <dbReference type="ChEBI" id="CHEBI:57292"/>
        <dbReference type="EC" id="2.3.1.117"/>
    </reaction>
</comment>
<comment type="pathway">
    <text evidence="1">Amino-acid biosynthesis; L-lysine biosynthesis via DAP pathway; LL-2,6-diaminopimelate from (S)-tetrahydrodipicolinate (succinylase route): step 1/3.</text>
</comment>
<comment type="subunit">
    <text evidence="1">Homotrimer.</text>
</comment>
<comment type="subcellular location">
    <subcellularLocation>
        <location evidence="1">Cytoplasm</location>
    </subcellularLocation>
</comment>
<comment type="similarity">
    <text evidence="1">Belongs to the transferase hexapeptide repeat family.</text>
</comment>
<evidence type="ECO:0000255" key="1">
    <source>
        <dbReference type="HAMAP-Rule" id="MF_00811"/>
    </source>
</evidence>
<evidence type="ECO:0007829" key="2">
    <source>
        <dbReference type="PDB" id="6WQM"/>
    </source>
</evidence>
<protein>
    <recommendedName>
        <fullName evidence="1">2,3,4,5-tetrahydropyridine-2,6-dicarboxylate N-succinyltransferase</fullName>
        <ecNumber evidence="1">2.3.1.117</ecNumber>
    </recommendedName>
    <alternativeName>
        <fullName evidence="1">Tetrahydrodipicolinate N-succinyltransferase</fullName>
        <shortName evidence="1">THDP succinyltransferase</shortName>
        <shortName evidence="1">THP succinyltransferase</shortName>
        <shortName evidence="1">Tetrahydropicolinate succinylase</shortName>
    </alternativeName>
</protein>
<name>DAPD_BARHE</name>
<gene>
    <name evidence="1" type="primary">dapD</name>
    <name type="ordered locus">BH00720</name>
</gene>
<dbReference type="EC" id="2.3.1.117" evidence="1"/>
<dbReference type="EMBL" id="BX897699">
    <property type="protein sequence ID" value="CAF26888.1"/>
    <property type="molecule type" value="Genomic_DNA"/>
</dbReference>
<dbReference type="RefSeq" id="WP_011180033.1">
    <property type="nucleotide sequence ID" value="NZ_LRIJ02000001.1"/>
</dbReference>
<dbReference type="PDB" id="6WQM">
    <property type="method" value="X-ray"/>
    <property type="resolution" value="2.15 A"/>
    <property type="chains" value="A/B/C/D/E/F=1-282"/>
</dbReference>
<dbReference type="PDBsum" id="6WQM"/>
<dbReference type="SMR" id="Q6G549"/>
<dbReference type="PaxDb" id="283166-BH00720"/>
<dbReference type="EnsemblBacteria" id="CAF26888">
    <property type="protein sequence ID" value="CAF26888"/>
    <property type="gene ID" value="BH00720"/>
</dbReference>
<dbReference type="GeneID" id="92986358"/>
<dbReference type="KEGG" id="bhe:BH00720"/>
<dbReference type="eggNOG" id="COG2171">
    <property type="taxonomic scope" value="Bacteria"/>
</dbReference>
<dbReference type="OrthoDB" id="9775362at2"/>
<dbReference type="UniPathway" id="UPA00034">
    <property type="reaction ID" value="UER00019"/>
</dbReference>
<dbReference type="Proteomes" id="UP000000421">
    <property type="component" value="Chromosome"/>
</dbReference>
<dbReference type="GO" id="GO:0005737">
    <property type="term" value="C:cytoplasm"/>
    <property type="evidence" value="ECO:0007669"/>
    <property type="project" value="UniProtKB-SubCell"/>
</dbReference>
<dbReference type="GO" id="GO:0008666">
    <property type="term" value="F:2,3,4,5-tetrahydropyridine-2,6-dicarboxylate N-succinyltransferase activity"/>
    <property type="evidence" value="ECO:0007669"/>
    <property type="project" value="UniProtKB-UniRule"/>
</dbReference>
<dbReference type="GO" id="GO:0016779">
    <property type="term" value="F:nucleotidyltransferase activity"/>
    <property type="evidence" value="ECO:0007669"/>
    <property type="project" value="TreeGrafter"/>
</dbReference>
<dbReference type="GO" id="GO:0019877">
    <property type="term" value="P:diaminopimelate biosynthetic process"/>
    <property type="evidence" value="ECO:0007669"/>
    <property type="project" value="UniProtKB-UniRule"/>
</dbReference>
<dbReference type="GO" id="GO:0009089">
    <property type="term" value="P:lysine biosynthetic process via diaminopimelate"/>
    <property type="evidence" value="ECO:0007669"/>
    <property type="project" value="UniProtKB-UniRule"/>
</dbReference>
<dbReference type="CDD" id="cd03350">
    <property type="entry name" value="LbH_THP_succinylT"/>
    <property type="match status" value="1"/>
</dbReference>
<dbReference type="Gene3D" id="2.160.10.10">
    <property type="entry name" value="Hexapeptide repeat proteins"/>
    <property type="match status" value="1"/>
</dbReference>
<dbReference type="Gene3D" id="1.10.166.10">
    <property type="entry name" value="Tetrahydrodipicolinate-N-succinyltransferase, N-terminal domain"/>
    <property type="match status" value="1"/>
</dbReference>
<dbReference type="HAMAP" id="MF_00811">
    <property type="entry name" value="DapD"/>
    <property type="match status" value="1"/>
</dbReference>
<dbReference type="InterPro" id="IPR005664">
    <property type="entry name" value="DapD_Trfase_Hexpep_rpt_fam"/>
</dbReference>
<dbReference type="InterPro" id="IPR001451">
    <property type="entry name" value="Hexapep"/>
</dbReference>
<dbReference type="InterPro" id="IPR018357">
    <property type="entry name" value="Hexapep_transf_CS"/>
</dbReference>
<dbReference type="InterPro" id="IPR023180">
    <property type="entry name" value="THP_succinylTrfase_dom1"/>
</dbReference>
<dbReference type="InterPro" id="IPR037133">
    <property type="entry name" value="THP_succinylTrfase_N_sf"/>
</dbReference>
<dbReference type="InterPro" id="IPR011004">
    <property type="entry name" value="Trimer_LpxA-like_sf"/>
</dbReference>
<dbReference type="NCBIfam" id="TIGR00965">
    <property type="entry name" value="dapD"/>
    <property type="match status" value="1"/>
</dbReference>
<dbReference type="NCBIfam" id="NF008808">
    <property type="entry name" value="PRK11830.1"/>
    <property type="match status" value="1"/>
</dbReference>
<dbReference type="PANTHER" id="PTHR19136:SF52">
    <property type="entry name" value="2,3,4,5-TETRAHYDROPYRIDINE-2,6-DICARBOXYLATE N-SUCCINYLTRANSFERASE"/>
    <property type="match status" value="1"/>
</dbReference>
<dbReference type="PANTHER" id="PTHR19136">
    <property type="entry name" value="MOLYBDENUM COFACTOR GUANYLYLTRANSFERASE"/>
    <property type="match status" value="1"/>
</dbReference>
<dbReference type="Pfam" id="PF14602">
    <property type="entry name" value="Hexapep_2"/>
    <property type="match status" value="1"/>
</dbReference>
<dbReference type="Pfam" id="PF14805">
    <property type="entry name" value="THDPS_N_2"/>
    <property type="match status" value="1"/>
</dbReference>
<dbReference type="SUPFAM" id="SSF51161">
    <property type="entry name" value="Trimeric LpxA-like enzymes"/>
    <property type="match status" value="1"/>
</dbReference>
<dbReference type="PROSITE" id="PS00101">
    <property type="entry name" value="HEXAPEP_TRANSFERASES"/>
    <property type="match status" value="1"/>
</dbReference>
<accession>Q6G549</accession>
<keyword id="KW-0002">3D-structure</keyword>
<keyword id="KW-0012">Acyltransferase</keyword>
<keyword id="KW-0028">Amino-acid biosynthesis</keyword>
<keyword id="KW-0963">Cytoplasm</keyword>
<keyword id="KW-0220">Diaminopimelate biosynthesis</keyword>
<keyword id="KW-0457">Lysine biosynthesis</keyword>
<keyword id="KW-0677">Repeat</keyword>
<keyword id="KW-0808">Transferase</keyword>
<feature type="chain" id="PRO_0000196913" description="2,3,4,5-tetrahydropyridine-2,6-dicarboxylate N-succinyltransferase">
    <location>
        <begin position="1"/>
        <end position="282"/>
    </location>
</feature>
<feature type="binding site" evidence="1">
    <location>
        <position position="109"/>
    </location>
    <ligand>
        <name>substrate</name>
    </ligand>
</feature>
<feature type="binding site" evidence="1">
    <location>
        <position position="146"/>
    </location>
    <ligand>
        <name>substrate</name>
    </ligand>
</feature>
<feature type="helix" evidence="2">
    <location>
        <begin position="4"/>
        <end position="16"/>
    </location>
</feature>
<feature type="helix" evidence="2">
    <location>
        <begin position="18"/>
        <end position="20"/>
    </location>
</feature>
<feature type="helix" evidence="2">
    <location>
        <begin position="27"/>
        <end position="41"/>
    </location>
</feature>
<feature type="strand" evidence="2">
    <location>
        <begin position="47"/>
        <end position="50"/>
    </location>
</feature>
<feature type="strand" evidence="2">
    <location>
        <begin position="56"/>
        <end position="58"/>
    </location>
</feature>
<feature type="helix" evidence="2">
    <location>
        <begin position="60"/>
        <end position="72"/>
    </location>
</feature>
<feature type="strand" evidence="2">
    <location>
        <begin position="76"/>
        <end position="78"/>
    </location>
</feature>
<feature type="helix" evidence="2">
    <location>
        <begin position="82"/>
        <end position="84"/>
    </location>
</feature>
<feature type="strand" evidence="2">
    <location>
        <begin position="87"/>
        <end position="90"/>
    </location>
</feature>
<feature type="turn" evidence="2">
    <location>
        <begin position="94"/>
        <end position="97"/>
    </location>
</feature>
<feature type="helix" evidence="2">
    <location>
        <begin position="100"/>
        <end position="106"/>
    </location>
</feature>
<feature type="strand" evidence="2">
    <location>
        <begin position="114"/>
        <end position="117"/>
    </location>
</feature>
<feature type="strand" evidence="2">
    <location>
        <begin position="130"/>
        <end position="133"/>
    </location>
</feature>
<feature type="strand" evidence="2">
    <location>
        <begin position="149"/>
        <end position="151"/>
    </location>
</feature>
<feature type="strand" evidence="2">
    <location>
        <begin position="218"/>
        <end position="221"/>
    </location>
</feature>
<feature type="turn" evidence="2">
    <location>
        <begin position="222"/>
        <end position="224"/>
    </location>
</feature>
<feature type="strand" evidence="2">
    <location>
        <begin position="227"/>
        <end position="232"/>
    </location>
</feature>
<feature type="strand" evidence="2">
    <location>
        <begin position="236"/>
        <end position="243"/>
    </location>
</feature>
<feature type="strand" evidence="2">
    <location>
        <begin position="256"/>
        <end position="265"/>
    </location>
</feature>
<feature type="helix" evidence="2">
    <location>
        <begin position="268"/>
        <end position="273"/>
    </location>
</feature>
<feature type="helix" evidence="2">
    <location>
        <begin position="276"/>
        <end position="281"/>
    </location>
</feature>
<organism>
    <name type="scientific">Bartonella henselae (strain ATCC 49882 / DSM 28221 / CCUG 30454 / Houston 1)</name>
    <name type="common">Rochalimaea henselae</name>
    <dbReference type="NCBI Taxonomy" id="283166"/>
    <lineage>
        <taxon>Bacteria</taxon>
        <taxon>Pseudomonadati</taxon>
        <taxon>Pseudomonadota</taxon>
        <taxon>Alphaproteobacteria</taxon>
        <taxon>Hyphomicrobiales</taxon>
        <taxon>Bartonellaceae</taxon>
        <taxon>Bartonella</taxon>
    </lineage>
</organism>
<reference key="1">
    <citation type="journal article" date="2004" name="Proc. Natl. Acad. Sci. U.S.A.">
        <title>The louse-borne human pathogen Bartonella quintana is a genomic derivative of the zoonotic agent Bartonella henselae.</title>
        <authorList>
            <person name="Alsmark U.C.M."/>
            <person name="Frank A.C."/>
            <person name="Karlberg E.O."/>
            <person name="Legault B.-A."/>
            <person name="Ardell D.H."/>
            <person name="Canbaeck B."/>
            <person name="Eriksson A.-S."/>
            <person name="Naeslund A.K."/>
            <person name="Handley S.A."/>
            <person name="Huvet M."/>
            <person name="La Scola B."/>
            <person name="Holmberg M."/>
            <person name="Andersson S.G.E."/>
        </authorList>
    </citation>
    <scope>NUCLEOTIDE SEQUENCE [LARGE SCALE GENOMIC DNA]</scope>
    <source>
        <strain>ATCC 49882 / DSM 28221 / CCUG 30454 / Houston 1</strain>
    </source>
</reference>
<proteinExistence type="evidence at protein level"/>